<organism>
    <name type="scientific">Rattus norvegicus</name>
    <name type="common">Rat</name>
    <dbReference type="NCBI Taxonomy" id="10116"/>
    <lineage>
        <taxon>Eukaryota</taxon>
        <taxon>Metazoa</taxon>
        <taxon>Chordata</taxon>
        <taxon>Craniata</taxon>
        <taxon>Vertebrata</taxon>
        <taxon>Euteleostomi</taxon>
        <taxon>Mammalia</taxon>
        <taxon>Eutheria</taxon>
        <taxon>Euarchontoglires</taxon>
        <taxon>Glires</taxon>
        <taxon>Rodentia</taxon>
        <taxon>Myomorpha</taxon>
        <taxon>Muroidea</taxon>
        <taxon>Muridae</taxon>
        <taxon>Murinae</taxon>
        <taxon>Rattus</taxon>
    </lineage>
</organism>
<feature type="initiator methionine" description="Removed" evidence="2">
    <location>
        <position position="1"/>
    </location>
</feature>
<feature type="chain" id="PRO_0000365097" description="Coactosin-like protein">
    <location>
        <begin position="2"/>
        <end position="142"/>
    </location>
</feature>
<feature type="domain" description="ADF-H" evidence="4">
    <location>
        <begin position="2"/>
        <end position="130"/>
    </location>
</feature>
<feature type="region of interest" description="Flexible and important for F-actin binding" evidence="1">
    <location>
        <begin position="66"/>
        <end position="75"/>
    </location>
</feature>
<feature type="modified residue" description="N-acetylalanine" evidence="2">
    <location>
        <position position="2"/>
    </location>
</feature>
<feature type="modified residue" description="Phosphoserine" evidence="10">
    <location>
        <position position="23"/>
    </location>
</feature>
<feature type="modified residue" description="N6-acetyllysine" evidence="2">
    <location>
        <position position="102"/>
    </location>
</feature>
<feature type="modified residue" description="Phosphoserine" evidence="10">
    <location>
        <position position="141"/>
    </location>
</feature>
<accession>B0BNA5</accession>
<sequence length="142" mass="15932">MATKIDKEACRAAYNLVRDDGSSVIWVTFKYDGATIVPGDQGADYQHFIQQCTDDVRLFAFVRFTTGDAMSKRSKFALITWIGEDVSGLQRAKTGTDKTLVKEVVQNFAKEFVISDRKELEEDFIRSELKKAGGANYDAQSE</sequence>
<name>COTL1_RAT</name>
<reference evidence="6 8" key="1">
    <citation type="submission" date="2005-07" db="EMBL/GenBank/DDBJ databases">
        <authorList>
            <person name="Mural R.J."/>
            <person name="Adams M.D."/>
            <person name="Myers E.W."/>
            <person name="Smith H.O."/>
            <person name="Venter J.C."/>
        </authorList>
    </citation>
    <scope>NUCLEOTIDE SEQUENCE [LARGE SCALE GENOMIC DNA]</scope>
    <source>
        <strain evidence="8">Brown Norway</strain>
    </source>
</reference>
<reference evidence="7" key="2">
    <citation type="journal article" date="2004" name="Genome Res.">
        <title>The status, quality, and expansion of the NIH full-length cDNA project: the Mammalian Gene Collection (MGC).</title>
        <authorList>
            <consortium name="The MGC Project Team"/>
        </authorList>
    </citation>
    <scope>NUCLEOTIDE SEQUENCE [LARGE SCALE MRNA]</scope>
    <source>
        <strain evidence="5">Brown Norway/Mcwi</strain>
        <tissue evidence="7">Spleen</tissue>
    </source>
</reference>
<reference evidence="6 8" key="3">
    <citation type="submission" date="2009-03" db="UniProtKB">
        <authorList>
            <person name="Maurya D.K."/>
            <person name="Bhargava P."/>
        </authorList>
    </citation>
    <scope>IDENTIFICATION BY MASS SPECTROMETRY</scope>
</reference>
<reference key="4">
    <citation type="journal article" date="2012" name="Nat. Commun.">
        <title>Quantitative maps of protein phosphorylation sites across 14 different rat organs and tissues.</title>
        <authorList>
            <person name="Lundby A."/>
            <person name="Secher A."/>
            <person name="Lage K."/>
            <person name="Nordsborg N.B."/>
            <person name="Dmytriyev A."/>
            <person name="Lundby C."/>
            <person name="Olsen J.V."/>
        </authorList>
    </citation>
    <scope>PHOSPHORYLATION [LARGE SCALE ANALYSIS] AT SER-23 AND SER-141</scope>
    <scope>IDENTIFICATION BY MASS SPECTROMETRY [LARGE SCALE ANALYSIS]</scope>
</reference>
<gene>
    <name evidence="7 9" type="primary">Cotl1</name>
    <name evidence="2" type="synonym">Clp</name>
</gene>
<comment type="function">
    <text evidence="1">Binds to F-actin in a calcium-independent manner. Has no direct effect on actin depolymerization. Acts as a chaperone for ALOX5 (5LO), influencing both its stability and activity in leukotrienes synthesis (By similarity).</text>
</comment>
<comment type="subunit">
    <text evidence="1">Interacts with 5-lipoxygenase (ALOX5/5LO) in a calcium-independent manner. Binds to F-actin with a stoichiometry of 1:2 (By similarity).</text>
</comment>
<comment type="subcellular location">
    <subcellularLocation>
        <location evidence="2">Cytoplasm</location>
    </subcellularLocation>
    <subcellularLocation>
        <location evidence="2">Cytoplasm</location>
        <location evidence="2">Cytoskeleton</location>
    </subcellularLocation>
    <subcellularLocation>
        <location evidence="2">Nucleus</location>
    </subcellularLocation>
</comment>
<comment type="similarity">
    <text evidence="3">Belongs to the actin-binding proteins ADF family. Coactosin subfamily.</text>
</comment>
<dbReference type="EMBL" id="CH473972">
    <property type="protein sequence ID" value="EDL92684.1"/>
    <property type="molecule type" value="Genomic_DNA"/>
</dbReference>
<dbReference type="EMBL" id="CH473972">
    <property type="protein sequence ID" value="EDL92686.1"/>
    <property type="molecule type" value="Genomic_DNA"/>
</dbReference>
<dbReference type="EMBL" id="BC158746">
    <property type="protein sequence ID" value="AAI58747.1"/>
    <property type="molecule type" value="mRNA"/>
</dbReference>
<dbReference type="RefSeq" id="NP_001101922.1">
    <property type="nucleotide sequence ID" value="NM_001108452.1"/>
</dbReference>
<dbReference type="BMRB" id="B0BNA5"/>
<dbReference type="SMR" id="B0BNA5"/>
<dbReference type="FunCoup" id="B0BNA5">
    <property type="interactions" value="1378"/>
</dbReference>
<dbReference type="STRING" id="10116.ENSRNOP00000021954"/>
<dbReference type="iPTMnet" id="B0BNA5"/>
<dbReference type="PhosphoSitePlus" id="B0BNA5"/>
<dbReference type="SwissPalm" id="B0BNA5"/>
<dbReference type="jPOST" id="B0BNA5"/>
<dbReference type="PaxDb" id="10116-ENSRNOP00000021954"/>
<dbReference type="PeptideAtlas" id="B0BNA5"/>
<dbReference type="GeneID" id="361422"/>
<dbReference type="KEGG" id="rno:361422"/>
<dbReference type="UCSC" id="RGD:1305498">
    <property type="organism name" value="rat"/>
</dbReference>
<dbReference type="AGR" id="RGD:1305498"/>
<dbReference type="CTD" id="23406"/>
<dbReference type="RGD" id="1305498">
    <property type="gene designation" value="Cotl1"/>
</dbReference>
<dbReference type="VEuPathDB" id="HostDB:ENSRNOG00000016257"/>
<dbReference type="eggNOG" id="KOG3655">
    <property type="taxonomic scope" value="Eukaryota"/>
</dbReference>
<dbReference type="HOGENOM" id="CLU_129657_1_0_1"/>
<dbReference type="InParanoid" id="B0BNA5"/>
<dbReference type="OrthoDB" id="10083at9989"/>
<dbReference type="PhylomeDB" id="B0BNA5"/>
<dbReference type="TreeFam" id="TF324318"/>
<dbReference type="Reactome" id="R-RNO-6798695">
    <property type="pathway name" value="Neutrophil degranulation"/>
</dbReference>
<dbReference type="PRO" id="PR:B0BNA5"/>
<dbReference type="Proteomes" id="UP000002494">
    <property type="component" value="Chromosome 19"/>
</dbReference>
<dbReference type="Proteomes" id="UP000234681">
    <property type="component" value="Chromosome 19"/>
</dbReference>
<dbReference type="Bgee" id="ENSRNOG00000016257">
    <property type="expression patterns" value="Expressed in spleen and 19 other cell types or tissues"/>
</dbReference>
<dbReference type="GO" id="GO:0030864">
    <property type="term" value="C:cortical actin cytoskeleton"/>
    <property type="evidence" value="ECO:0000318"/>
    <property type="project" value="GO_Central"/>
</dbReference>
<dbReference type="GO" id="GO:0005634">
    <property type="term" value="C:nucleus"/>
    <property type="evidence" value="ECO:0007669"/>
    <property type="project" value="UniProtKB-SubCell"/>
</dbReference>
<dbReference type="GO" id="GO:0030427">
    <property type="term" value="C:site of polarized growth"/>
    <property type="evidence" value="ECO:0000318"/>
    <property type="project" value="GO_Central"/>
</dbReference>
<dbReference type="GO" id="GO:0003779">
    <property type="term" value="F:actin binding"/>
    <property type="evidence" value="ECO:0000266"/>
    <property type="project" value="RGD"/>
</dbReference>
<dbReference type="GO" id="GO:0051015">
    <property type="term" value="F:actin filament binding"/>
    <property type="evidence" value="ECO:0000318"/>
    <property type="project" value="GO_Central"/>
</dbReference>
<dbReference type="GO" id="GO:0019899">
    <property type="term" value="F:enzyme binding"/>
    <property type="evidence" value="ECO:0000266"/>
    <property type="project" value="RGD"/>
</dbReference>
<dbReference type="GO" id="GO:0050832">
    <property type="term" value="P:defense response to fungus"/>
    <property type="evidence" value="ECO:0000266"/>
    <property type="project" value="RGD"/>
</dbReference>
<dbReference type="GO" id="GO:0030833">
    <property type="term" value="P:regulation of actin filament polymerization"/>
    <property type="evidence" value="ECO:0000318"/>
    <property type="project" value="GO_Central"/>
</dbReference>
<dbReference type="CDD" id="cd11282">
    <property type="entry name" value="ADF_coactosin_like"/>
    <property type="match status" value="1"/>
</dbReference>
<dbReference type="FunFam" id="3.40.20.10:FF:000018">
    <property type="entry name" value="Coactosin-like 1"/>
    <property type="match status" value="1"/>
</dbReference>
<dbReference type="Gene3D" id="3.40.20.10">
    <property type="entry name" value="Severin"/>
    <property type="match status" value="1"/>
</dbReference>
<dbReference type="InterPro" id="IPR002108">
    <property type="entry name" value="ADF-H"/>
</dbReference>
<dbReference type="InterPro" id="IPR029006">
    <property type="entry name" value="ADF-H/Gelsolin-like_dom_sf"/>
</dbReference>
<dbReference type="PANTHER" id="PTHR10829:SF29">
    <property type="entry name" value="COACTOSIN-LIKE PROTEIN"/>
    <property type="match status" value="1"/>
</dbReference>
<dbReference type="PANTHER" id="PTHR10829">
    <property type="entry name" value="CORTACTIN AND DREBRIN"/>
    <property type="match status" value="1"/>
</dbReference>
<dbReference type="Pfam" id="PF00241">
    <property type="entry name" value="Cofilin_ADF"/>
    <property type="match status" value="1"/>
</dbReference>
<dbReference type="SMART" id="SM00102">
    <property type="entry name" value="ADF"/>
    <property type="match status" value="1"/>
</dbReference>
<dbReference type="SUPFAM" id="SSF55753">
    <property type="entry name" value="Actin depolymerizing proteins"/>
    <property type="match status" value="1"/>
</dbReference>
<dbReference type="PROSITE" id="PS51263">
    <property type="entry name" value="ADF_H"/>
    <property type="match status" value="1"/>
</dbReference>
<proteinExistence type="evidence at protein level"/>
<evidence type="ECO:0000250" key="1"/>
<evidence type="ECO:0000250" key="2">
    <source>
        <dbReference type="UniProtKB" id="Q14019"/>
    </source>
</evidence>
<evidence type="ECO:0000255" key="3"/>
<evidence type="ECO:0000255" key="4">
    <source>
        <dbReference type="PROSITE-ProRule" id="PRU00599"/>
    </source>
</evidence>
<evidence type="ECO:0000269" key="5">
    <source>
    </source>
</evidence>
<evidence type="ECO:0000305" key="6"/>
<evidence type="ECO:0000312" key="7">
    <source>
        <dbReference type="EMBL" id="AAI58747.1"/>
    </source>
</evidence>
<evidence type="ECO:0000312" key="8">
    <source>
        <dbReference type="EMBL" id="EDL92684.1"/>
    </source>
</evidence>
<evidence type="ECO:0000312" key="9">
    <source>
        <dbReference type="RGD" id="1305498"/>
    </source>
</evidence>
<evidence type="ECO:0007744" key="10">
    <source>
    </source>
</evidence>
<protein>
    <recommendedName>
        <fullName evidence="2">Coactosin-like protein</fullName>
    </recommendedName>
</protein>
<keyword id="KW-0007">Acetylation</keyword>
<keyword id="KW-0009">Actin-binding</keyword>
<keyword id="KW-0143">Chaperone</keyword>
<keyword id="KW-0963">Cytoplasm</keyword>
<keyword id="KW-0206">Cytoskeleton</keyword>
<keyword id="KW-0539">Nucleus</keyword>
<keyword id="KW-0597">Phosphoprotein</keyword>
<keyword id="KW-1185">Reference proteome</keyword>